<reference key="1">
    <citation type="journal article" date="2011" name="J. Bacteriol.">
        <title>Comparative genomics of 28 Salmonella enterica isolates: evidence for CRISPR-mediated adaptive sublineage evolution.</title>
        <authorList>
            <person name="Fricke W.F."/>
            <person name="Mammel M.K."/>
            <person name="McDermott P.F."/>
            <person name="Tartera C."/>
            <person name="White D.G."/>
            <person name="Leclerc J.E."/>
            <person name="Ravel J."/>
            <person name="Cebula T.A."/>
        </authorList>
    </citation>
    <scope>NUCLEOTIDE SEQUENCE [LARGE SCALE GENOMIC DNA]</scope>
    <source>
        <strain>SL476</strain>
    </source>
</reference>
<protein>
    <recommendedName>
        <fullName evidence="1">UPF0758 protein YicR</fullName>
    </recommendedName>
</protein>
<proteinExistence type="inferred from homology"/>
<keyword id="KW-0378">Hydrolase</keyword>
<keyword id="KW-0479">Metal-binding</keyword>
<keyword id="KW-0482">Metalloprotease</keyword>
<keyword id="KW-0645">Protease</keyword>
<keyword id="KW-0862">Zinc</keyword>
<sequence>MDTLDELLPREKMLRSGIASLSDVELLALFLRTGTPGKDVMTLAKEILQHFGSLYGLLSADFAQFRGVNGIGLAKFAQLKGIAELARRYYSVRMNEESALLSPEMTREFLQSQLTGEEREIFLVIFLDAQHRVLQHSRLFSGTLNHVEVHPREIVREAIKLNASAVILAHNHPSGCAEPSKADKLITERVIKCCQFMDIRVLDHLIIGRGEYVSFAERGWI</sequence>
<accession>B4T9C3</accession>
<feature type="chain" id="PRO_1000089841" description="UPF0758 protein YicR">
    <location>
        <begin position="1"/>
        <end position="221"/>
    </location>
</feature>
<feature type="domain" description="MPN" evidence="2">
    <location>
        <begin position="99"/>
        <end position="221"/>
    </location>
</feature>
<feature type="short sequence motif" description="JAMM motif" evidence="2">
    <location>
        <begin position="170"/>
        <end position="183"/>
    </location>
</feature>
<feature type="binding site" evidence="2">
    <location>
        <position position="170"/>
    </location>
    <ligand>
        <name>Zn(2+)</name>
        <dbReference type="ChEBI" id="CHEBI:29105"/>
        <note>catalytic</note>
    </ligand>
</feature>
<feature type="binding site" evidence="2">
    <location>
        <position position="172"/>
    </location>
    <ligand>
        <name>Zn(2+)</name>
        <dbReference type="ChEBI" id="CHEBI:29105"/>
        <note>catalytic</note>
    </ligand>
</feature>
<feature type="binding site" evidence="2">
    <location>
        <position position="183"/>
    </location>
    <ligand>
        <name>Zn(2+)</name>
        <dbReference type="ChEBI" id="CHEBI:29105"/>
        <note>catalytic</note>
    </ligand>
</feature>
<comment type="similarity">
    <text evidence="1">Belongs to the UPF0758 family. YicR subfamily.</text>
</comment>
<name>YICR_SALHS</name>
<evidence type="ECO:0000255" key="1">
    <source>
        <dbReference type="HAMAP-Rule" id="MF_00018"/>
    </source>
</evidence>
<evidence type="ECO:0000255" key="2">
    <source>
        <dbReference type="PROSITE-ProRule" id="PRU01182"/>
    </source>
</evidence>
<dbReference type="EMBL" id="CP001120">
    <property type="protein sequence ID" value="ACF65969.1"/>
    <property type="molecule type" value="Genomic_DNA"/>
</dbReference>
<dbReference type="SMR" id="B4T9C3"/>
<dbReference type="KEGG" id="seh:SeHA_C4055"/>
<dbReference type="HOGENOM" id="CLU_073529_0_1_6"/>
<dbReference type="Proteomes" id="UP000001866">
    <property type="component" value="Chromosome"/>
</dbReference>
<dbReference type="GO" id="GO:0046872">
    <property type="term" value="F:metal ion binding"/>
    <property type="evidence" value="ECO:0007669"/>
    <property type="project" value="UniProtKB-KW"/>
</dbReference>
<dbReference type="GO" id="GO:0008237">
    <property type="term" value="F:metallopeptidase activity"/>
    <property type="evidence" value="ECO:0007669"/>
    <property type="project" value="UniProtKB-KW"/>
</dbReference>
<dbReference type="GO" id="GO:0006508">
    <property type="term" value="P:proteolysis"/>
    <property type="evidence" value="ECO:0007669"/>
    <property type="project" value="UniProtKB-KW"/>
</dbReference>
<dbReference type="CDD" id="cd08071">
    <property type="entry name" value="MPN_DUF2466"/>
    <property type="match status" value="1"/>
</dbReference>
<dbReference type="Gene3D" id="3.40.140.10">
    <property type="entry name" value="Cytidine Deaminase, domain 2"/>
    <property type="match status" value="1"/>
</dbReference>
<dbReference type="HAMAP" id="MF_00018">
    <property type="entry name" value="UPF0758_YicR"/>
    <property type="match status" value="1"/>
</dbReference>
<dbReference type="InterPro" id="IPR037518">
    <property type="entry name" value="MPN"/>
</dbReference>
<dbReference type="InterPro" id="IPR025657">
    <property type="entry name" value="RadC_JAB"/>
</dbReference>
<dbReference type="InterPro" id="IPR010994">
    <property type="entry name" value="RuvA_2-like"/>
</dbReference>
<dbReference type="InterPro" id="IPR001405">
    <property type="entry name" value="UPF0758"/>
</dbReference>
<dbReference type="InterPro" id="IPR020891">
    <property type="entry name" value="UPF0758_CS"/>
</dbReference>
<dbReference type="InterPro" id="IPR046778">
    <property type="entry name" value="UPF0758_N"/>
</dbReference>
<dbReference type="InterPro" id="IPR022820">
    <property type="entry name" value="UPF0758_YicR"/>
</dbReference>
<dbReference type="NCBIfam" id="NF000642">
    <property type="entry name" value="PRK00024.1"/>
    <property type="match status" value="1"/>
</dbReference>
<dbReference type="NCBIfam" id="TIGR00608">
    <property type="entry name" value="radc"/>
    <property type="match status" value="1"/>
</dbReference>
<dbReference type="PANTHER" id="PTHR30471">
    <property type="entry name" value="DNA REPAIR PROTEIN RADC"/>
    <property type="match status" value="1"/>
</dbReference>
<dbReference type="PANTHER" id="PTHR30471:SF3">
    <property type="entry name" value="UPF0758 PROTEIN YEES-RELATED"/>
    <property type="match status" value="1"/>
</dbReference>
<dbReference type="Pfam" id="PF04002">
    <property type="entry name" value="RadC"/>
    <property type="match status" value="1"/>
</dbReference>
<dbReference type="Pfam" id="PF20582">
    <property type="entry name" value="UPF0758_N"/>
    <property type="match status" value="1"/>
</dbReference>
<dbReference type="SUPFAM" id="SSF47781">
    <property type="entry name" value="RuvA domain 2-like"/>
    <property type="match status" value="1"/>
</dbReference>
<dbReference type="PROSITE" id="PS50249">
    <property type="entry name" value="MPN"/>
    <property type="match status" value="1"/>
</dbReference>
<dbReference type="PROSITE" id="PS01302">
    <property type="entry name" value="UPF0758"/>
    <property type="match status" value="1"/>
</dbReference>
<gene>
    <name evidence="1" type="primary">yicR</name>
    <name type="ordered locus">SeHA_C4055</name>
</gene>
<organism>
    <name type="scientific">Salmonella heidelberg (strain SL476)</name>
    <dbReference type="NCBI Taxonomy" id="454169"/>
    <lineage>
        <taxon>Bacteria</taxon>
        <taxon>Pseudomonadati</taxon>
        <taxon>Pseudomonadota</taxon>
        <taxon>Gammaproteobacteria</taxon>
        <taxon>Enterobacterales</taxon>
        <taxon>Enterobacteriaceae</taxon>
        <taxon>Salmonella</taxon>
    </lineage>
</organism>